<gene>
    <name evidence="1" type="primary">lepA</name>
    <name type="ordered locus">FTM_0042</name>
</gene>
<dbReference type="EC" id="3.6.5.n1" evidence="1"/>
<dbReference type="EMBL" id="CP000915">
    <property type="protein sequence ID" value="ACD30155.1"/>
    <property type="molecule type" value="Genomic_DNA"/>
</dbReference>
<dbReference type="SMR" id="B2SEJ6"/>
<dbReference type="KEGG" id="ftm:FTM_0042"/>
<dbReference type="HOGENOM" id="CLU_009995_3_3_6"/>
<dbReference type="GO" id="GO:0005886">
    <property type="term" value="C:plasma membrane"/>
    <property type="evidence" value="ECO:0007669"/>
    <property type="project" value="UniProtKB-SubCell"/>
</dbReference>
<dbReference type="GO" id="GO:0005525">
    <property type="term" value="F:GTP binding"/>
    <property type="evidence" value="ECO:0007669"/>
    <property type="project" value="UniProtKB-UniRule"/>
</dbReference>
<dbReference type="GO" id="GO:0003924">
    <property type="term" value="F:GTPase activity"/>
    <property type="evidence" value="ECO:0007669"/>
    <property type="project" value="UniProtKB-UniRule"/>
</dbReference>
<dbReference type="GO" id="GO:0097216">
    <property type="term" value="F:guanosine tetraphosphate binding"/>
    <property type="evidence" value="ECO:0007669"/>
    <property type="project" value="UniProtKB-ARBA"/>
</dbReference>
<dbReference type="GO" id="GO:0043022">
    <property type="term" value="F:ribosome binding"/>
    <property type="evidence" value="ECO:0007669"/>
    <property type="project" value="UniProtKB-UniRule"/>
</dbReference>
<dbReference type="GO" id="GO:0003746">
    <property type="term" value="F:translation elongation factor activity"/>
    <property type="evidence" value="ECO:0007669"/>
    <property type="project" value="UniProtKB-UniRule"/>
</dbReference>
<dbReference type="GO" id="GO:0045727">
    <property type="term" value="P:positive regulation of translation"/>
    <property type="evidence" value="ECO:0007669"/>
    <property type="project" value="UniProtKB-UniRule"/>
</dbReference>
<dbReference type="CDD" id="cd03699">
    <property type="entry name" value="EF4_II"/>
    <property type="match status" value="1"/>
</dbReference>
<dbReference type="CDD" id="cd16260">
    <property type="entry name" value="EF4_III"/>
    <property type="match status" value="1"/>
</dbReference>
<dbReference type="CDD" id="cd01890">
    <property type="entry name" value="LepA"/>
    <property type="match status" value="1"/>
</dbReference>
<dbReference type="CDD" id="cd03709">
    <property type="entry name" value="lepA_C"/>
    <property type="match status" value="1"/>
</dbReference>
<dbReference type="FunFam" id="3.40.50.300:FF:000078">
    <property type="entry name" value="Elongation factor 4"/>
    <property type="match status" value="1"/>
</dbReference>
<dbReference type="FunFam" id="2.40.30.10:FF:000015">
    <property type="entry name" value="Translation factor GUF1, mitochondrial"/>
    <property type="match status" value="1"/>
</dbReference>
<dbReference type="FunFam" id="3.30.70.240:FF:000007">
    <property type="entry name" value="Translation factor GUF1, mitochondrial"/>
    <property type="match status" value="1"/>
</dbReference>
<dbReference type="FunFam" id="3.30.70.2570:FF:000001">
    <property type="entry name" value="Translation factor GUF1, mitochondrial"/>
    <property type="match status" value="1"/>
</dbReference>
<dbReference type="FunFam" id="3.30.70.870:FF:000004">
    <property type="entry name" value="Translation factor GUF1, mitochondrial"/>
    <property type="match status" value="1"/>
</dbReference>
<dbReference type="Gene3D" id="3.30.70.240">
    <property type="match status" value="1"/>
</dbReference>
<dbReference type="Gene3D" id="3.30.70.2570">
    <property type="entry name" value="Elongation factor 4, C-terminal domain"/>
    <property type="match status" value="1"/>
</dbReference>
<dbReference type="Gene3D" id="3.30.70.870">
    <property type="entry name" value="Elongation Factor G (Translational Gtpase), domain 3"/>
    <property type="match status" value="1"/>
</dbReference>
<dbReference type="Gene3D" id="3.40.50.300">
    <property type="entry name" value="P-loop containing nucleotide triphosphate hydrolases"/>
    <property type="match status" value="1"/>
</dbReference>
<dbReference type="Gene3D" id="2.40.30.10">
    <property type="entry name" value="Translation factors"/>
    <property type="match status" value="1"/>
</dbReference>
<dbReference type="HAMAP" id="MF_00071">
    <property type="entry name" value="LepA"/>
    <property type="match status" value="1"/>
</dbReference>
<dbReference type="InterPro" id="IPR006297">
    <property type="entry name" value="EF-4"/>
</dbReference>
<dbReference type="InterPro" id="IPR035647">
    <property type="entry name" value="EFG_III/V"/>
</dbReference>
<dbReference type="InterPro" id="IPR000640">
    <property type="entry name" value="EFG_V-like"/>
</dbReference>
<dbReference type="InterPro" id="IPR004161">
    <property type="entry name" value="EFTu-like_2"/>
</dbReference>
<dbReference type="InterPro" id="IPR031157">
    <property type="entry name" value="G_TR_CS"/>
</dbReference>
<dbReference type="InterPro" id="IPR038363">
    <property type="entry name" value="LepA_C_sf"/>
</dbReference>
<dbReference type="InterPro" id="IPR013842">
    <property type="entry name" value="LepA_CTD"/>
</dbReference>
<dbReference type="InterPro" id="IPR035654">
    <property type="entry name" value="LepA_IV"/>
</dbReference>
<dbReference type="InterPro" id="IPR027417">
    <property type="entry name" value="P-loop_NTPase"/>
</dbReference>
<dbReference type="InterPro" id="IPR005225">
    <property type="entry name" value="Small_GTP-bd"/>
</dbReference>
<dbReference type="InterPro" id="IPR000795">
    <property type="entry name" value="T_Tr_GTP-bd_dom"/>
</dbReference>
<dbReference type="NCBIfam" id="TIGR01393">
    <property type="entry name" value="lepA"/>
    <property type="match status" value="1"/>
</dbReference>
<dbReference type="NCBIfam" id="TIGR00231">
    <property type="entry name" value="small_GTP"/>
    <property type="match status" value="1"/>
</dbReference>
<dbReference type="PANTHER" id="PTHR43512:SF4">
    <property type="entry name" value="TRANSLATION FACTOR GUF1 HOMOLOG, CHLOROPLASTIC"/>
    <property type="match status" value="1"/>
</dbReference>
<dbReference type="PANTHER" id="PTHR43512">
    <property type="entry name" value="TRANSLATION FACTOR GUF1-RELATED"/>
    <property type="match status" value="1"/>
</dbReference>
<dbReference type="Pfam" id="PF00679">
    <property type="entry name" value="EFG_C"/>
    <property type="match status" value="1"/>
</dbReference>
<dbReference type="Pfam" id="PF00009">
    <property type="entry name" value="GTP_EFTU"/>
    <property type="match status" value="1"/>
</dbReference>
<dbReference type="Pfam" id="PF03144">
    <property type="entry name" value="GTP_EFTU_D2"/>
    <property type="match status" value="1"/>
</dbReference>
<dbReference type="Pfam" id="PF06421">
    <property type="entry name" value="LepA_C"/>
    <property type="match status" value="1"/>
</dbReference>
<dbReference type="PRINTS" id="PR00315">
    <property type="entry name" value="ELONGATNFCT"/>
</dbReference>
<dbReference type="SUPFAM" id="SSF54980">
    <property type="entry name" value="EF-G C-terminal domain-like"/>
    <property type="match status" value="2"/>
</dbReference>
<dbReference type="SUPFAM" id="SSF52540">
    <property type="entry name" value="P-loop containing nucleoside triphosphate hydrolases"/>
    <property type="match status" value="1"/>
</dbReference>
<dbReference type="PROSITE" id="PS00301">
    <property type="entry name" value="G_TR_1"/>
    <property type="match status" value="1"/>
</dbReference>
<dbReference type="PROSITE" id="PS51722">
    <property type="entry name" value="G_TR_2"/>
    <property type="match status" value="1"/>
</dbReference>
<keyword id="KW-0997">Cell inner membrane</keyword>
<keyword id="KW-1003">Cell membrane</keyword>
<keyword id="KW-0342">GTP-binding</keyword>
<keyword id="KW-0378">Hydrolase</keyword>
<keyword id="KW-0472">Membrane</keyword>
<keyword id="KW-0547">Nucleotide-binding</keyword>
<keyword id="KW-0648">Protein biosynthesis</keyword>
<reference key="1">
    <citation type="journal article" date="2009" name="PLoS Pathog.">
        <title>Molecular evolutionary consequences of niche restriction in Francisella tularensis, a facultative intracellular pathogen.</title>
        <authorList>
            <person name="Larsson P."/>
            <person name="Elfsmark D."/>
            <person name="Svensson K."/>
            <person name="Wikstroem P."/>
            <person name="Forsman M."/>
            <person name="Brettin T."/>
            <person name="Keim P."/>
            <person name="Johansson A."/>
        </authorList>
    </citation>
    <scope>NUCLEOTIDE SEQUENCE [LARGE SCALE GENOMIC DNA]</scope>
    <source>
        <strain>FSC147</strain>
    </source>
</reference>
<feature type="chain" id="PRO_1000092402" description="Elongation factor 4">
    <location>
        <begin position="1"/>
        <end position="597"/>
    </location>
</feature>
<feature type="domain" description="tr-type G">
    <location>
        <begin position="2"/>
        <end position="184"/>
    </location>
</feature>
<feature type="binding site" evidence="1">
    <location>
        <begin position="14"/>
        <end position="19"/>
    </location>
    <ligand>
        <name>GTP</name>
        <dbReference type="ChEBI" id="CHEBI:37565"/>
    </ligand>
</feature>
<feature type="binding site" evidence="1">
    <location>
        <begin position="131"/>
        <end position="134"/>
    </location>
    <ligand>
        <name>GTP</name>
        <dbReference type="ChEBI" id="CHEBI:37565"/>
    </ligand>
</feature>
<evidence type="ECO:0000255" key="1">
    <source>
        <dbReference type="HAMAP-Rule" id="MF_00071"/>
    </source>
</evidence>
<proteinExistence type="inferred from homology"/>
<name>LEPA_FRATM</name>
<sequence length="597" mass="65867">MKNIRNFSIIAHIDHGKSTLSDRFIQVCNGLSEREMKEQVLDSMDIERERGITIKAQSVTLDYTARDGQTYQLNFIDTPGHVDFSYEVSRSLAACEGALLVVDAAQGVEAQTVANCYTAIEQNLEVIPILNKIDLPSAEPDRVAQEIEEIIGIDATGATTCSAKIGIGVEDVLETIVAKVPAPEGDVNAKLQALIIDSWFDNYLGVVSLVRVKNGTIKKGEKFKVMSTGVAYQVDRLGVFTPKMKDLDHLKAGEVGFIVAGIKDIHGAPVGDTLTHAHNPTDKPVPGFKKVQPQVYAGMFTISSDNYPDFREALEKLSLNDASLFFEPEVSQALGFGFRCGFLGMLHMEIIQERLEREYNLDLITSAPTVVYKAIKKDGEIIEVDNLSKLPEPGAIAEIQEPIVRANILVPKDYVGSVITICIEKRGVQVDLNYVGNQVSITYDLPMIEVVSDFFDTLKSVTKGYGSLDYELIRYEPANMVCLDVLINGDKVDALASIVHKDQAKYKGRELVERLKELIPRQMFEVAIQAAIGGTIVARSTVKALRKNVLAKCYGGDVSRKKKLLEKQKEGKKRMKNIGSVEIPQEAFLSVLKKIKL</sequence>
<protein>
    <recommendedName>
        <fullName evidence="1">Elongation factor 4</fullName>
        <shortName evidence="1">EF-4</shortName>
        <ecNumber evidence="1">3.6.5.n1</ecNumber>
    </recommendedName>
    <alternativeName>
        <fullName evidence="1">Ribosomal back-translocase LepA</fullName>
    </alternativeName>
</protein>
<comment type="function">
    <text evidence="1">Required for accurate and efficient protein synthesis under certain stress conditions. May act as a fidelity factor of the translation reaction, by catalyzing a one-codon backward translocation of tRNAs on improperly translocated ribosomes. Back-translocation proceeds from a post-translocation (POST) complex to a pre-translocation (PRE) complex, thus giving elongation factor G a second chance to translocate the tRNAs correctly. Binds to ribosomes in a GTP-dependent manner.</text>
</comment>
<comment type="catalytic activity">
    <reaction evidence="1">
        <text>GTP + H2O = GDP + phosphate + H(+)</text>
        <dbReference type="Rhea" id="RHEA:19669"/>
        <dbReference type="ChEBI" id="CHEBI:15377"/>
        <dbReference type="ChEBI" id="CHEBI:15378"/>
        <dbReference type="ChEBI" id="CHEBI:37565"/>
        <dbReference type="ChEBI" id="CHEBI:43474"/>
        <dbReference type="ChEBI" id="CHEBI:58189"/>
        <dbReference type="EC" id="3.6.5.n1"/>
    </reaction>
</comment>
<comment type="subcellular location">
    <subcellularLocation>
        <location evidence="1">Cell inner membrane</location>
        <topology evidence="1">Peripheral membrane protein</topology>
        <orientation evidence="1">Cytoplasmic side</orientation>
    </subcellularLocation>
</comment>
<comment type="similarity">
    <text evidence="1">Belongs to the TRAFAC class translation factor GTPase superfamily. Classic translation factor GTPase family. LepA subfamily.</text>
</comment>
<organism>
    <name type="scientific">Francisella tularensis subsp. mediasiatica (strain FSC147)</name>
    <dbReference type="NCBI Taxonomy" id="441952"/>
    <lineage>
        <taxon>Bacteria</taxon>
        <taxon>Pseudomonadati</taxon>
        <taxon>Pseudomonadota</taxon>
        <taxon>Gammaproteobacteria</taxon>
        <taxon>Thiotrichales</taxon>
        <taxon>Francisellaceae</taxon>
        <taxon>Francisella</taxon>
    </lineage>
</organism>
<accession>B2SEJ6</accession>